<dbReference type="PIR" id="B41575">
    <property type="entry name" value="B41575"/>
</dbReference>
<dbReference type="SMR" id="P29003"/>
<dbReference type="GO" id="GO:0005576">
    <property type="term" value="C:extracellular region"/>
    <property type="evidence" value="ECO:0007669"/>
    <property type="project" value="UniProtKB-SubCell"/>
</dbReference>
<dbReference type="GO" id="GO:0042742">
    <property type="term" value="P:defense response to bacterium"/>
    <property type="evidence" value="ECO:0007669"/>
    <property type="project" value="UniProtKB-KW"/>
</dbReference>
<dbReference type="InterPro" id="IPR007962">
    <property type="entry name" value="Bombinin"/>
</dbReference>
<dbReference type="Pfam" id="PF05298">
    <property type="entry name" value="Bombinin"/>
    <property type="match status" value="1"/>
</dbReference>
<comment type="function">
    <text>Has antimicrobial activity, but no hemolytic activity. Preference on killing Gram-negative non-enteric bacteria.</text>
</comment>
<comment type="subcellular location">
    <subcellularLocation>
        <location>Secreted</location>
    </subcellularLocation>
</comment>
<comment type="tissue specificity">
    <text>Expressed by the skin glands.</text>
</comment>
<comment type="similarity">
    <text evidence="2">Belongs to the bombinin family.</text>
</comment>
<feature type="peptide" id="PRO_0000043501" description="Bombinin-like peptide 2">
    <location>
        <begin position="1"/>
        <end position="27"/>
    </location>
</feature>
<feature type="modified residue" description="Asparagine amide" evidence="1">
    <location>
        <position position="27"/>
    </location>
</feature>
<protein>
    <recommendedName>
        <fullName>Bombinin-like peptide 2</fullName>
        <shortName>BLP-2</shortName>
    </recommendedName>
</protein>
<name>BMNL2_BOMOR</name>
<keyword id="KW-0027">Amidation</keyword>
<keyword id="KW-0878">Amphibian defense peptide</keyword>
<keyword id="KW-0044">Antibiotic</keyword>
<keyword id="KW-0929">Antimicrobial</keyword>
<keyword id="KW-0903">Direct protein sequencing</keyword>
<keyword id="KW-0964">Secreted</keyword>
<accession>P29003</accession>
<organism>
    <name type="scientific">Bombina orientalis</name>
    <name type="common">Oriental fire-bellied toad</name>
    <dbReference type="NCBI Taxonomy" id="8346"/>
    <lineage>
        <taxon>Eukaryota</taxon>
        <taxon>Metazoa</taxon>
        <taxon>Chordata</taxon>
        <taxon>Craniata</taxon>
        <taxon>Vertebrata</taxon>
        <taxon>Euteleostomi</taxon>
        <taxon>Amphibia</taxon>
        <taxon>Batrachia</taxon>
        <taxon>Anura</taxon>
        <taxon>Bombinatoridae</taxon>
        <taxon>Bombina</taxon>
    </lineage>
</organism>
<proteinExistence type="evidence at protein level"/>
<evidence type="ECO:0000269" key="1">
    <source>
    </source>
</evidence>
<evidence type="ECO:0000305" key="2"/>
<reference key="1">
    <citation type="journal article" date="1991" name="J. Biol. Chem.">
        <title>Bombinin-like peptides with antimicrobial activity from skin secretions of the Asian toad, Bombina orientalis.</title>
        <authorList>
            <person name="Gibson B.W."/>
            <person name="Tang D."/>
            <person name="Mandrell R."/>
            <person name="Kelly M."/>
            <person name="Spindel E.R."/>
        </authorList>
    </citation>
    <scope>PROTEIN SEQUENCE</scope>
    <scope>AMIDATION AT ASN-27</scope>
    <source>
        <tissue>Skin secretion</tissue>
    </source>
</reference>
<sequence length="27" mass="2582">GIGSAILSAGKSALKGLAKGLAEHFAN</sequence>